<dbReference type="GO" id="GO:0005576">
    <property type="term" value="C:extracellular region"/>
    <property type="evidence" value="ECO:0007669"/>
    <property type="project" value="UniProtKB-SubCell"/>
</dbReference>
<dbReference type="GO" id="GO:0007218">
    <property type="term" value="P:neuropeptide signaling pathway"/>
    <property type="evidence" value="ECO:0007669"/>
    <property type="project" value="UniProtKB-KW"/>
</dbReference>
<organism>
    <name type="scientific">Loligo vulgaris</name>
    <name type="common">Common European squid</name>
    <dbReference type="NCBI Taxonomy" id="6622"/>
    <lineage>
        <taxon>Eukaryota</taxon>
        <taxon>Metazoa</taxon>
        <taxon>Spiralia</taxon>
        <taxon>Lophotrochozoa</taxon>
        <taxon>Mollusca</taxon>
        <taxon>Cephalopoda</taxon>
        <taxon>Coleoidea</taxon>
        <taxon>Decapodiformes</taxon>
        <taxon>Myopsida</taxon>
        <taxon>Loliginidae</taxon>
        <taxon>Loligo</taxon>
    </lineage>
</organism>
<sequence length="9" mass="1092">YAIVARPRF</sequence>
<reference key="1">
    <citation type="journal article" date="1992" name="Biochem. Biophys. Res. Commun.">
        <title>Peptide tyrosine phenylalanine: a novel neuropeptide F-related nonapeptide from the brain of the squid, Loligo vulgaris.</title>
        <authorList>
            <person name="Smart D."/>
            <person name="Shaw C."/>
            <person name="Johnston C."/>
            <person name="Thim L."/>
            <person name="Halton D."/>
            <person name="Buchanan K."/>
        </authorList>
    </citation>
    <scope>PROTEIN SEQUENCE</scope>
    <scope>MASS SPECTROMETRY</scope>
    <scope>AMIDATION AT PHE-9</scope>
    <source>
        <tissue>Brain</tissue>
    </source>
</reference>
<comment type="subcellular location">
    <subcellularLocation>
        <location>Secreted</location>
    </subcellularLocation>
</comment>
<comment type="mass spectrometry" mass="1093.1" error="0.7" method="Plasma desorption" evidence="1"/>
<comment type="similarity">
    <text evidence="2">Belongs to the NPY family.</text>
</comment>
<proteinExistence type="evidence at protein level"/>
<keyword id="KW-0027">Amidation</keyword>
<keyword id="KW-0903">Direct protein sequencing</keyword>
<keyword id="KW-0527">Neuropeptide</keyword>
<keyword id="KW-0964">Secreted</keyword>
<protein>
    <recommendedName>
        <fullName>Peptide tyrosine phenylalanine</fullName>
    </recommendedName>
    <alternativeName>
        <fullName>Neuropeptide F-related peptide</fullName>
    </alternativeName>
    <alternativeName>
        <fullName>PYF</fullName>
    </alternativeName>
</protein>
<accession>P84004</accession>
<name>PYF_LOLVU</name>
<feature type="peptide" id="PRO_0000044298" description="Peptide tyrosine phenylalanine">
    <location>
        <begin position="1"/>
        <end position="9"/>
    </location>
</feature>
<feature type="modified residue" description="Phenylalanine amide" evidence="1">
    <location>
        <position position="9"/>
    </location>
</feature>
<evidence type="ECO:0000269" key="1">
    <source>
    </source>
</evidence>
<evidence type="ECO:0000305" key="2"/>